<accession>F4I274</accession>
<accession>A8MSE5</accession>
<accession>Q9SEZ2</accession>
<sequence length="336" mass="37896">MCLLMEINNNANNTNTTIDNHKAKMSLVLSTDAKPRLKWTCDLHHKFIEAVNQLGGPNKATPKGLMKVMEIPGLTLYHLKSHLQKYRLGKSMKFDDNKLEVSSASENQEVESKNDSRDLRGCSVTEENSNPAKEGLQITEALQMQMEVQKKLHEQIEVQRHLQVKIEAQGKYLQSVLMKAQQTLAGYSSSNLGMDFARTELSRLASMVNRGCPSTSFSELTQVEEEEEGFLWYKKPENRGISQLRCSVESSLTSSETSETKLDTDNNLNKSIELPLMEINSEVMKGKKRSINDVVCVEQPLMKRAFGVDDDEHLKLSLNTYKKDMEACTNIGLGFN</sequence>
<name>PHL8_ARATH</name>
<proteinExistence type="evidence at transcript level"/>
<gene>
    <name evidence="4" type="primary">PHL8</name>
    <name evidence="5" type="ordered locus">At1g69580</name>
    <name evidence="6" type="ORF">F24J1.30</name>
</gene>
<reference key="1">
    <citation type="journal article" date="2000" name="Nature">
        <title>Sequence and analysis of chromosome 1 of the plant Arabidopsis thaliana.</title>
        <authorList>
            <person name="Theologis A."/>
            <person name="Ecker J.R."/>
            <person name="Palm C.J."/>
            <person name="Federspiel N.A."/>
            <person name="Kaul S."/>
            <person name="White O."/>
            <person name="Alonso J."/>
            <person name="Altafi H."/>
            <person name="Araujo R."/>
            <person name="Bowman C.L."/>
            <person name="Brooks S.Y."/>
            <person name="Buehler E."/>
            <person name="Chan A."/>
            <person name="Chao Q."/>
            <person name="Chen H."/>
            <person name="Cheuk R.F."/>
            <person name="Chin C.W."/>
            <person name="Chung M.K."/>
            <person name="Conn L."/>
            <person name="Conway A.B."/>
            <person name="Conway A.R."/>
            <person name="Creasy T.H."/>
            <person name="Dewar K."/>
            <person name="Dunn P."/>
            <person name="Etgu P."/>
            <person name="Feldblyum T.V."/>
            <person name="Feng J.-D."/>
            <person name="Fong B."/>
            <person name="Fujii C.Y."/>
            <person name="Gill J.E."/>
            <person name="Goldsmith A.D."/>
            <person name="Haas B."/>
            <person name="Hansen N.F."/>
            <person name="Hughes B."/>
            <person name="Huizar L."/>
            <person name="Hunter J.L."/>
            <person name="Jenkins J."/>
            <person name="Johnson-Hopson C."/>
            <person name="Khan S."/>
            <person name="Khaykin E."/>
            <person name="Kim C.J."/>
            <person name="Koo H.L."/>
            <person name="Kremenetskaia I."/>
            <person name="Kurtz D.B."/>
            <person name="Kwan A."/>
            <person name="Lam B."/>
            <person name="Langin-Hooper S."/>
            <person name="Lee A."/>
            <person name="Lee J.M."/>
            <person name="Lenz C.A."/>
            <person name="Li J.H."/>
            <person name="Li Y.-P."/>
            <person name="Lin X."/>
            <person name="Liu S.X."/>
            <person name="Liu Z.A."/>
            <person name="Luros J.S."/>
            <person name="Maiti R."/>
            <person name="Marziali A."/>
            <person name="Militscher J."/>
            <person name="Miranda M."/>
            <person name="Nguyen M."/>
            <person name="Nierman W.C."/>
            <person name="Osborne B.I."/>
            <person name="Pai G."/>
            <person name="Peterson J."/>
            <person name="Pham P.K."/>
            <person name="Rizzo M."/>
            <person name="Rooney T."/>
            <person name="Rowley D."/>
            <person name="Sakano H."/>
            <person name="Salzberg S.L."/>
            <person name="Schwartz J.R."/>
            <person name="Shinn P."/>
            <person name="Southwick A.M."/>
            <person name="Sun H."/>
            <person name="Tallon L.J."/>
            <person name="Tambunga G."/>
            <person name="Toriumi M.J."/>
            <person name="Town C.D."/>
            <person name="Utterback T."/>
            <person name="Van Aken S."/>
            <person name="Vaysberg M."/>
            <person name="Vysotskaia V.S."/>
            <person name="Walker M."/>
            <person name="Wu D."/>
            <person name="Yu G."/>
            <person name="Fraser C.M."/>
            <person name="Venter J.C."/>
            <person name="Davis R.W."/>
        </authorList>
    </citation>
    <scope>NUCLEOTIDE SEQUENCE [LARGE SCALE GENOMIC DNA]</scope>
    <source>
        <strain>cv. Columbia</strain>
    </source>
</reference>
<reference key="2">
    <citation type="journal article" date="2017" name="Plant J.">
        <title>Araport11: a complete reannotation of the Arabidopsis thaliana reference genome.</title>
        <authorList>
            <person name="Cheng C.Y."/>
            <person name="Krishnakumar V."/>
            <person name="Chan A.P."/>
            <person name="Thibaud-Nissen F."/>
            <person name="Schobel S."/>
            <person name="Town C.D."/>
        </authorList>
    </citation>
    <scope>GENOME REANNOTATION</scope>
    <source>
        <strain>cv. Columbia</strain>
    </source>
</reference>
<reference key="3">
    <citation type="submission" date="2006-12" db="EMBL/GenBank/DDBJ databases">
        <title>Arabidopsis ORF clones.</title>
        <authorList>
            <person name="Bautista V.R."/>
            <person name="Kim C.J."/>
            <person name="Chen H."/>
            <person name="Quinitio C."/>
            <person name="Ecker J.R."/>
        </authorList>
    </citation>
    <scope>NUCLEOTIDE SEQUENCE [LARGE SCALE MRNA] OF 5-336 (ISOFORM 1)</scope>
</reference>
<reference key="4">
    <citation type="journal article" date="2001" name="Genes Dev.">
        <title>A conserved MYB transcription factor involved in phosphate starvation signaling both in vascular plants and in unicellular algae.</title>
        <authorList>
            <person name="Rubio V."/>
            <person name="Linhares F."/>
            <person name="Solano R."/>
            <person name="Martin A.C."/>
            <person name="Iglesias J."/>
            <person name="Leyva A."/>
            <person name="Paz-Ares J."/>
        </authorList>
    </citation>
    <scope>GENE FAMILY</scope>
</reference>
<evidence type="ECO:0000255" key="1"/>
<evidence type="ECO:0000255" key="2">
    <source>
        <dbReference type="PROSITE-ProRule" id="PRU00625"/>
    </source>
</evidence>
<evidence type="ECO:0000256" key="3">
    <source>
        <dbReference type="SAM" id="MobiDB-lite"/>
    </source>
</evidence>
<evidence type="ECO:0000305" key="4"/>
<evidence type="ECO:0000312" key="5">
    <source>
        <dbReference type="Araport" id="AT1G69580"/>
    </source>
</evidence>
<evidence type="ECO:0000312" key="6">
    <source>
        <dbReference type="EMBL" id="AAF24605.1"/>
    </source>
</evidence>
<evidence type="ECO:0000312" key="7">
    <source>
        <dbReference type="Proteomes" id="UP000006548"/>
    </source>
</evidence>
<protein>
    <recommendedName>
        <fullName evidence="4">Myb family transcription factor PHL8</fullName>
    </recommendedName>
    <alternativeName>
        <fullName evidence="4">Protein PHR1-LIKE 8</fullName>
    </alternativeName>
</protein>
<dbReference type="EMBL" id="AC021046">
    <property type="protein sequence ID" value="AAF24605.1"/>
    <property type="status" value="ALT_INIT"/>
    <property type="molecule type" value="Genomic_DNA"/>
</dbReference>
<dbReference type="EMBL" id="CP002684">
    <property type="protein sequence ID" value="AEE34951.1"/>
    <property type="molecule type" value="Genomic_DNA"/>
</dbReference>
<dbReference type="EMBL" id="CP002684">
    <property type="protein sequence ID" value="AEE34952.1"/>
    <property type="molecule type" value="Genomic_DNA"/>
</dbReference>
<dbReference type="EMBL" id="BT029516">
    <property type="protein sequence ID" value="ABL66772.1"/>
    <property type="molecule type" value="mRNA"/>
</dbReference>
<dbReference type="PIR" id="E96717">
    <property type="entry name" value="E96717"/>
</dbReference>
<dbReference type="RefSeq" id="NP_001077798.1">
    <molecule id="F4I274-2"/>
    <property type="nucleotide sequence ID" value="NM_001084329.1"/>
</dbReference>
<dbReference type="RefSeq" id="NP_177117.2">
    <molecule id="F4I274-1"/>
    <property type="nucleotide sequence ID" value="NM_105627.3"/>
</dbReference>
<dbReference type="SMR" id="F4I274"/>
<dbReference type="FunCoup" id="F4I274">
    <property type="interactions" value="81"/>
</dbReference>
<dbReference type="STRING" id="3702.F4I274"/>
<dbReference type="PaxDb" id="3702-AT1G69580.2"/>
<dbReference type="ProteomicsDB" id="235057">
    <molecule id="F4I274-1"/>
</dbReference>
<dbReference type="EnsemblPlants" id="AT1G69580.1">
    <molecule id="F4I274-1"/>
    <property type="protein sequence ID" value="AT1G69580.1"/>
    <property type="gene ID" value="AT1G69580"/>
</dbReference>
<dbReference type="EnsemblPlants" id="AT1G69580.2">
    <molecule id="F4I274-2"/>
    <property type="protein sequence ID" value="AT1G69580.2"/>
    <property type="gene ID" value="AT1G69580"/>
</dbReference>
<dbReference type="GeneID" id="843294"/>
<dbReference type="Gramene" id="AT1G69580.1">
    <molecule id="F4I274-1"/>
    <property type="protein sequence ID" value="AT1G69580.1"/>
    <property type="gene ID" value="AT1G69580"/>
</dbReference>
<dbReference type="Gramene" id="AT1G69580.2">
    <molecule id="F4I274-2"/>
    <property type="protein sequence ID" value="AT1G69580.2"/>
    <property type="gene ID" value="AT1G69580"/>
</dbReference>
<dbReference type="KEGG" id="ath:AT1G69580"/>
<dbReference type="Araport" id="AT1G69580"/>
<dbReference type="TAIR" id="AT1G69580"/>
<dbReference type="eggNOG" id="ENOG502QT5C">
    <property type="taxonomic scope" value="Eukaryota"/>
</dbReference>
<dbReference type="HOGENOM" id="CLU_053944_3_2_1"/>
<dbReference type="InParanoid" id="F4I274"/>
<dbReference type="OMA" id="MDLQNMQ"/>
<dbReference type="PRO" id="PR:F4I274"/>
<dbReference type="Proteomes" id="UP000006548">
    <property type="component" value="Chromosome 1"/>
</dbReference>
<dbReference type="ExpressionAtlas" id="F4I274">
    <property type="expression patterns" value="baseline and differential"/>
</dbReference>
<dbReference type="GO" id="GO:0005634">
    <property type="term" value="C:nucleus"/>
    <property type="evidence" value="ECO:0007669"/>
    <property type="project" value="UniProtKB-SubCell"/>
</dbReference>
<dbReference type="GO" id="GO:0003677">
    <property type="term" value="F:DNA binding"/>
    <property type="evidence" value="ECO:0007669"/>
    <property type="project" value="UniProtKB-KW"/>
</dbReference>
<dbReference type="GO" id="GO:0003700">
    <property type="term" value="F:DNA-binding transcription factor activity"/>
    <property type="evidence" value="ECO:0000250"/>
    <property type="project" value="TAIR"/>
</dbReference>
<dbReference type="GO" id="GO:0006355">
    <property type="term" value="P:regulation of DNA-templated transcription"/>
    <property type="evidence" value="ECO:0000304"/>
    <property type="project" value="TAIR"/>
</dbReference>
<dbReference type="FunFam" id="1.10.10.60:FF:000002">
    <property type="entry name" value="Myb family transcription factor"/>
    <property type="match status" value="1"/>
</dbReference>
<dbReference type="Gene3D" id="1.10.10.60">
    <property type="entry name" value="Homeodomain-like"/>
    <property type="match status" value="1"/>
</dbReference>
<dbReference type="InterPro" id="IPR009057">
    <property type="entry name" value="Homeodomain-like_sf"/>
</dbReference>
<dbReference type="InterPro" id="IPR025756">
    <property type="entry name" value="Myb_CC_LHEQLE"/>
</dbReference>
<dbReference type="InterPro" id="IPR006447">
    <property type="entry name" value="Myb_dom_plants"/>
</dbReference>
<dbReference type="InterPro" id="IPR046955">
    <property type="entry name" value="PHR1-like"/>
</dbReference>
<dbReference type="InterPro" id="IPR001005">
    <property type="entry name" value="SANT/Myb"/>
</dbReference>
<dbReference type="NCBIfam" id="TIGR01557">
    <property type="entry name" value="myb_SHAQKYF"/>
    <property type="match status" value="1"/>
</dbReference>
<dbReference type="PANTHER" id="PTHR31499">
    <property type="entry name" value="MYB FAMILY TRANSCRIPTION FACTOR PHL11"/>
    <property type="match status" value="1"/>
</dbReference>
<dbReference type="PANTHER" id="PTHR31499:SF11">
    <property type="entry name" value="MYB FAMILY TRANSCRIPTION FACTOR PHL8"/>
    <property type="match status" value="1"/>
</dbReference>
<dbReference type="Pfam" id="PF14379">
    <property type="entry name" value="Myb_CC_LHEQLE"/>
    <property type="match status" value="1"/>
</dbReference>
<dbReference type="Pfam" id="PF00249">
    <property type="entry name" value="Myb_DNA-binding"/>
    <property type="match status" value="1"/>
</dbReference>
<dbReference type="SUPFAM" id="SSF46689">
    <property type="entry name" value="Homeodomain-like"/>
    <property type="match status" value="1"/>
</dbReference>
<comment type="subcellular location">
    <subcellularLocation>
        <location evidence="2">Nucleus</location>
    </subcellularLocation>
</comment>
<comment type="alternative products">
    <event type="alternative splicing"/>
    <isoform>
        <id>F4I274-1</id>
        <name>1</name>
        <sequence type="displayed"/>
    </isoform>
    <isoform>
        <id>F4I274-2</id>
        <name>2</name>
        <sequence type="described" ref="VSP_058434"/>
    </isoform>
</comment>
<comment type="similarity">
    <text evidence="4">Belongs to the MYB-CC family.</text>
</comment>
<comment type="sequence caution" evidence="4">
    <conflict type="erroneous initiation">
        <sequence resource="EMBL-CDS" id="AAF24605"/>
    </conflict>
    <text>Truncated N-terminus.</text>
</comment>
<organism evidence="7">
    <name type="scientific">Arabidopsis thaliana</name>
    <name type="common">Mouse-ear cress</name>
    <dbReference type="NCBI Taxonomy" id="3702"/>
    <lineage>
        <taxon>Eukaryota</taxon>
        <taxon>Viridiplantae</taxon>
        <taxon>Streptophyta</taxon>
        <taxon>Embryophyta</taxon>
        <taxon>Tracheophyta</taxon>
        <taxon>Spermatophyta</taxon>
        <taxon>Magnoliopsida</taxon>
        <taxon>eudicotyledons</taxon>
        <taxon>Gunneridae</taxon>
        <taxon>Pentapetalae</taxon>
        <taxon>rosids</taxon>
        <taxon>malvids</taxon>
        <taxon>Brassicales</taxon>
        <taxon>Brassicaceae</taxon>
        <taxon>Camelineae</taxon>
        <taxon>Arabidopsis</taxon>
    </lineage>
</organism>
<feature type="chain" id="PRO_0000436865" description="Myb family transcription factor PHL8">
    <location>
        <begin position="1"/>
        <end position="336"/>
    </location>
</feature>
<feature type="domain" description="HTH myb-type" evidence="2">
    <location>
        <begin position="31"/>
        <end position="91"/>
    </location>
</feature>
<feature type="DNA-binding region" description="H-T-H motif" evidence="2">
    <location>
        <begin position="62"/>
        <end position="87"/>
    </location>
</feature>
<feature type="region of interest" description="Disordered" evidence="3">
    <location>
        <begin position="100"/>
        <end position="134"/>
    </location>
</feature>
<feature type="coiled-coil region" evidence="1">
    <location>
        <begin position="139"/>
        <end position="159"/>
    </location>
</feature>
<feature type="short sequence motif" description="LHEQLE" evidence="4">
    <location>
        <begin position="152"/>
        <end position="157"/>
    </location>
</feature>
<feature type="compositionally biased region" description="Basic and acidic residues" evidence="3">
    <location>
        <begin position="110"/>
        <end position="120"/>
    </location>
</feature>
<feature type="splice variant" id="VSP_058434" description="In isoform 2.">
    <original>E</original>
    <variation>DR</variation>
    <location>
        <position position="134"/>
    </location>
</feature>
<keyword id="KW-0025">Alternative splicing</keyword>
<keyword id="KW-0175">Coiled coil</keyword>
<keyword id="KW-0238">DNA-binding</keyword>
<keyword id="KW-0371">Homeobox</keyword>
<keyword id="KW-0539">Nucleus</keyword>
<keyword id="KW-1185">Reference proteome</keyword>
<keyword id="KW-0804">Transcription</keyword>
<keyword id="KW-0805">Transcription regulation</keyword>